<reference key="1">
    <citation type="journal article" date="2010" name="Stand. Genomic Sci.">
        <title>Complete genome sequence of Rhizobium leguminosarum bv. trifolii strain WSM1325, an effective microsymbiont of annual Mediterranean clovers.</title>
        <authorList>
            <person name="Reeve W."/>
            <person name="O'Hara G."/>
            <person name="Chain P."/>
            <person name="Ardley J."/>
            <person name="Brau L."/>
            <person name="Nandesena K."/>
            <person name="Tiwari R."/>
            <person name="Copeland A."/>
            <person name="Nolan M."/>
            <person name="Han C."/>
            <person name="Brettin T."/>
            <person name="Land M."/>
            <person name="Ovchinikova G."/>
            <person name="Ivanova N."/>
            <person name="Mavromatis K."/>
            <person name="Markowitz V."/>
            <person name="Kyrpides N."/>
            <person name="Melino V."/>
            <person name="Denton M."/>
            <person name="Yates R."/>
            <person name="Howieson J."/>
        </authorList>
    </citation>
    <scope>NUCLEOTIDE SEQUENCE [LARGE SCALE GENOMIC DNA]</scope>
    <source>
        <strain>WSM1325</strain>
    </source>
</reference>
<keyword id="KW-0067">ATP-binding</keyword>
<keyword id="KW-0963">Cytoplasm</keyword>
<keyword id="KW-0275">Fatty acid biosynthesis</keyword>
<keyword id="KW-0276">Fatty acid metabolism</keyword>
<keyword id="KW-0444">Lipid biosynthesis</keyword>
<keyword id="KW-0443">Lipid metabolism</keyword>
<keyword id="KW-0547">Nucleotide-binding</keyword>
<keyword id="KW-0808">Transferase</keyword>
<accession>C6B119</accession>
<sequence length="301" mass="33078">MNWITNYVRPRINSMLGRREVPENLWIKCPETGEMVFHKDLEGNKWVIPASGYHMKMPAKARLADLFDNGEFESLPQPKVAQDPLKFRDSKKYSDRLRDSRLKTEQEDTILAGVGKVQGLKLVAVVHEFNFIGGSLGMAAGEAIVKAFERATAEKCPLVMFPASGGARMQEGILSLMQLPRTTVAVDMLKESGQPYIVVLTNPTTGGVTASYAMLGDIHLAEPGAEIGFAGKRVIEQTLREKLPEGFQTSEYLLEHGMVDMVVKRHDIPETLARLLKILTKKPVSAANDMNSGAIALAASA</sequence>
<dbReference type="EC" id="2.1.3.15" evidence="1"/>
<dbReference type="EMBL" id="CP001622">
    <property type="protein sequence ID" value="ACS58523.1"/>
    <property type="molecule type" value="Genomic_DNA"/>
</dbReference>
<dbReference type="SMR" id="C6B119"/>
<dbReference type="KEGG" id="rlg:Rleg_4283"/>
<dbReference type="HOGENOM" id="CLU_015486_1_0_5"/>
<dbReference type="OrthoDB" id="9772975at2"/>
<dbReference type="UniPathway" id="UPA00655">
    <property type="reaction ID" value="UER00711"/>
</dbReference>
<dbReference type="Proteomes" id="UP000002256">
    <property type="component" value="Chromosome"/>
</dbReference>
<dbReference type="GO" id="GO:0009329">
    <property type="term" value="C:acetate CoA-transferase complex"/>
    <property type="evidence" value="ECO:0007669"/>
    <property type="project" value="TreeGrafter"/>
</dbReference>
<dbReference type="GO" id="GO:0003989">
    <property type="term" value="F:acetyl-CoA carboxylase activity"/>
    <property type="evidence" value="ECO:0007669"/>
    <property type="project" value="InterPro"/>
</dbReference>
<dbReference type="GO" id="GO:0005524">
    <property type="term" value="F:ATP binding"/>
    <property type="evidence" value="ECO:0007669"/>
    <property type="project" value="UniProtKB-KW"/>
</dbReference>
<dbReference type="GO" id="GO:0016743">
    <property type="term" value="F:carboxyl- or carbamoyltransferase activity"/>
    <property type="evidence" value="ECO:0007669"/>
    <property type="project" value="UniProtKB-UniRule"/>
</dbReference>
<dbReference type="GO" id="GO:0006633">
    <property type="term" value="P:fatty acid biosynthetic process"/>
    <property type="evidence" value="ECO:0007669"/>
    <property type="project" value="UniProtKB-KW"/>
</dbReference>
<dbReference type="GO" id="GO:2001295">
    <property type="term" value="P:malonyl-CoA biosynthetic process"/>
    <property type="evidence" value="ECO:0007669"/>
    <property type="project" value="UniProtKB-UniRule"/>
</dbReference>
<dbReference type="Gene3D" id="3.90.226.10">
    <property type="entry name" value="2-enoyl-CoA Hydratase, Chain A, domain 1"/>
    <property type="match status" value="1"/>
</dbReference>
<dbReference type="HAMAP" id="MF_01395">
    <property type="entry name" value="AcetylCoA_CT_beta"/>
    <property type="match status" value="1"/>
</dbReference>
<dbReference type="InterPro" id="IPR034733">
    <property type="entry name" value="AcCoA_carboxyl_beta"/>
</dbReference>
<dbReference type="InterPro" id="IPR000438">
    <property type="entry name" value="Acetyl_CoA_COase_Trfase_b_su"/>
</dbReference>
<dbReference type="InterPro" id="IPR029045">
    <property type="entry name" value="ClpP/crotonase-like_dom_sf"/>
</dbReference>
<dbReference type="InterPro" id="IPR011762">
    <property type="entry name" value="COA_CT_N"/>
</dbReference>
<dbReference type="NCBIfam" id="TIGR00515">
    <property type="entry name" value="accD"/>
    <property type="match status" value="1"/>
</dbReference>
<dbReference type="PANTHER" id="PTHR42995">
    <property type="entry name" value="ACETYL-COENZYME A CARBOXYLASE CARBOXYL TRANSFERASE SUBUNIT BETA, CHLOROPLASTIC"/>
    <property type="match status" value="1"/>
</dbReference>
<dbReference type="PANTHER" id="PTHR42995:SF5">
    <property type="entry name" value="ACETYL-COENZYME A CARBOXYLASE CARBOXYL TRANSFERASE SUBUNIT BETA, CHLOROPLASTIC"/>
    <property type="match status" value="1"/>
</dbReference>
<dbReference type="Pfam" id="PF01039">
    <property type="entry name" value="Carboxyl_trans"/>
    <property type="match status" value="1"/>
</dbReference>
<dbReference type="PRINTS" id="PR01070">
    <property type="entry name" value="ACCCTRFRASEB"/>
</dbReference>
<dbReference type="SUPFAM" id="SSF52096">
    <property type="entry name" value="ClpP/crotonase"/>
    <property type="match status" value="1"/>
</dbReference>
<dbReference type="PROSITE" id="PS50980">
    <property type="entry name" value="COA_CT_NTER"/>
    <property type="match status" value="1"/>
</dbReference>
<feature type="chain" id="PRO_0000389826" description="Acetyl-coenzyme A carboxylase carboxyl transferase subunit beta">
    <location>
        <begin position="1"/>
        <end position="301"/>
    </location>
</feature>
<feature type="domain" description="CoA carboxyltransferase N-terminal" evidence="2">
    <location>
        <begin position="25"/>
        <end position="294"/>
    </location>
</feature>
<evidence type="ECO:0000255" key="1">
    <source>
        <dbReference type="HAMAP-Rule" id="MF_01395"/>
    </source>
</evidence>
<evidence type="ECO:0000255" key="2">
    <source>
        <dbReference type="PROSITE-ProRule" id="PRU01136"/>
    </source>
</evidence>
<gene>
    <name evidence="1" type="primary">accD</name>
    <name type="ordered locus">Rleg_4283</name>
</gene>
<proteinExistence type="inferred from homology"/>
<protein>
    <recommendedName>
        <fullName evidence="1">Acetyl-coenzyme A carboxylase carboxyl transferase subunit beta</fullName>
        <shortName evidence="1">ACCase subunit beta</shortName>
        <shortName evidence="1">Acetyl-CoA carboxylase carboxyltransferase subunit beta</shortName>
        <ecNumber evidence="1">2.1.3.15</ecNumber>
    </recommendedName>
</protein>
<name>ACCD_RHILS</name>
<comment type="function">
    <text evidence="1">Component of the acetyl coenzyme A carboxylase (ACC) complex. Biotin carboxylase (BC) catalyzes the carboxylation of biotin on its carrier protein (BCCP) and then the CO(2) group is transferred by the transcarboxylase to acetyl-CoA to form malonyl-CoA.</text>
</comment>
<comment type="catalytic activity">
    <reaction evidence="1">
        <text>N(6)-carboxybiotinyl-L-lysyl-[protein] + acetyl-CoA = N(6)-biotinyl-L-lysyl-[protein] + malonyl-CoA</text>
        <dbReference type="Rhea" id="RHEA:54728"/>
        <dbReference type="Rhea" id="RHEA-COMP:10505"/>
        <dbReference type="Rhea" id="RHEA-COMP:10506"/>
        <dbReference type="ChEBI" id="CHEBI:57288"/>
        <dbReference type="ChEBI" id="CHEBI:57384"/>
        <dbReference type="ChEBI" id="CHEBI:83144"/>
        <dbReference type="ChEBI" id="CHEBI:83145"/>
        <dbReference type="EC" id="2.1.3.15"/>
    </reaction>
</comment>
<comment type="pathway">
    <text evidence="1">Lipid metabolism; malonyl-CoA biosynthesis; malonyl-CoA from acetyl-CoA: step 1/1.</text>
</comment>
<comment type="subunit">
    <text evidence="1">Acetyl-CoA carboxylase is a heterohexamer composed of biotin carboxyl carrier protein (AccB), biotin carboxylase (AccC) and two subunits each of ACCase subunit alpha (AccA) and ACCase subunit beta (AccD).</text>
</comment>
<comment type="subcellular location">
    <subcellularLocation>
        <location evidence="1">Cytoplasm</location>
    </subcellularLocation>
</comment>
<comment type="similarity">
    <text evidence="1">Belongs to the AccD/PCCB family.</text>
</comment>
<organism>
    <name type="scientific">Rhizobium leguminosarum bv. trifolii (strain WSM1325)</name>
    <dbReference type="NCBI Taxonomy" id="395491"/>
    <lineage>
        <taxon>Bacteria</taxon>
        <taxon>Pseudomonadati</taxon>
        <taxon>Pseudomonadota</taxon>
        <taxon>Alphaproteobacteria</taxon>
        <taxon>Hyphomicrobiales</taxon>
        <taxon>Rhizobiaceae</taxon>
        <taxon>Rhizobium/Agrobacterium group</taxon>
        <taxon>Rhizobium</taxon>
    </lineage>
</organism>